<organism>
    <name type="scientific">Yersinia pestis bv. Antiqua (strain Nepal516)</name>
    <dbReference type="NCBI Taxonomy" id="377628"/>
    <lineage>
        <taxon>Bacteria</taxon>
        <taxon>Pseudomonadati</taxon>
        <taxon>Pseudomonadota</taxon>
        <taxon>Gammaproteobacteria</taxon>
        <taxon>Enterobacterales</taxon>
        <taxon>Yersiniaceae</taxon>
        <taxon>Yersinia</taxon>
    </lineage>
</organism>
<reference key="1">
    <citation type="journal article" date="2006" name="J. Bacteriol.">
        <title>Complete genome sequence of Yersinia pestis strains Antiqua and Nepal516: evidence of gene reduction in an emerging pathogen.</title>
        <authorList>
            <person name="Chain P.S.G."/>
            <person name="Hu P."/>
            <person name="Malfatti S.A."/>
            <person name="Radnedge L."/>
            <person name="Larimer F."/>
            <person name="Vergez L.M."/>
            <person name="Worsham P."/>
            <person name="Chu M.C."/>
            <person name="Andersen G.L."/>
        </authorList>
    </citation>
    <scope>NUCLEOTIDE SEQUENCE [LARGE SCALE GENOMIC DNA]</scope>
    <source>
        <strain>Nepal516</strain>
    </source>
</reference>
<reference key="2">
    <citation type="submission" date="2009-04" db="EMBL/GenBank/DDBJ databases">
        <title>Yersinia pestis Nepal516A whole genome shotgun sequencing project.</title>
        <authorList>
            <person name="Plunkett G. III"/>
            <person name="Anderson B.D."/>
            <person name="Baumler D.J."/>
            <person name="Burland V."/>
            <person name="Cabot E.L."/>
            <person name="Glasner J.D."/>
            <person name="Mau B."/>
            <person name="Neeno-Eckwall E."/>
            <person name="Perna N.T."/>
            <person name="Munk A.C."/>
            <person name="Tapia R."/>
            <person name="Green L.D."/>
            <person name="Rogers Y.C."/>
            <person name="Detter J.C."/>
            <person name="Bruce D.C."/>
            <person name="Brettin T.S."/>
        </authorList>
    </citation>
    <scope>NUCLEOTIDE SEQUENCE [LARGE SCALE GENOMIC DNA]</scope>
    <source>
        <strain>Nepal516</strain>
    </source>
</reference>
<feature type="chain" id="PRO_1000067476" description="C4-dicarboxylate transport protein">
    <location>
        <begin position="1"/>
        <end position="429"/>
    </location>
</feature>
<feature type="transmembrane region" description="Helical" evidence="1">
    <location>
        <begin position="3"/>
        <end position="23"/>
    </location>
</feature>
<feature type="transmembrane region" description="Helical" evidence="1">
    <location>
        <begin position="44"/>
        <end position="64"/>
    </location>
</feature>
<feature type="transmembrane region" description="Helical" evidence="1">
    <location>
        <begin position="76"/>
        <end position="96"/>
    </location>
</feature>
<feature type="transmembrane region" description="Helical" evidence="1">
    <location>
        <begin position="144"/>
        <end position="164"/>
    </location>
</feature>
<feature type="transmembrane region" description="Helical" evidence="1">
    <location>
        <begin position="184"/>
        <end position="204"/>
    </location>
</feature>
<feature type="transmembrane region" description="Helical" evidence="1">
    <location>
        <begin position="222"/>
        <end position="242"/>
    </location>
</feature>
<feature type="transmembrane region" description="Helical" evidence="1">
    <location>
        <begin position="331"/>
        <end position="351"/>
    </location>
</feature>
<feature type="transmembrane region" description="Helical" evidence="1">
    <location>
        <begin position="352"/>
        <end position="372"/>
    </location>
</feature>
<protein>
    <recommendedName>
        <fullName evidence="1">C4-dicarboxylate transport protein</fullName>
    </recommendedName>
</protein>
<gene>
    <name evidence="1" type="primary">dctA</name>
    <name type="ordered locus">YPN_3642</name>
    <name type="ORF">YP516_4136</name>
</gene>
<accession>Q1CDG1</accession>
<accession>D1Q1Y4</accession>
<name>DCTA_YERPN</name>
<evidence type="ECO:0000255" key="1">
    <source>
        <dbReference type="HAMAP-Rule" id="MF_01300"/>
    </source>
</evidence>
<dbReference type="EMBL" id="CP000305">
    <property type="protein sequence ID" value="ABG19969.1"/>
    <property type="molecule type" value="Genomic_DNA"/>
</dbReference>
<dbReference type="EMBL" id="ACNQ01000019">
    <property type="protein sequence ID" value="EEO74537.1"/>
    <property type="molecule type" value="Genomic_DNA"/>
</dbReference>
<dbReference type="RefSeq" id="WP_002209553.1">
    <property type="nucleotide sequence ID" value="NZ_ACNQ01000019.1"/>
</dbReference>
<dbReference type="SMR" id="Q1CDG1"/>
<dbReference type="KEGG" id="ypn:YPN_3642"/>
<dbReference type="HOGENOM" id="CLU_019375_7_0_6"/>
<dbReference type="Proteomes" id="UP000008936">
    <property type="component" value="Chromosome"/>
</dbReference>
<dbReference type="GO" id="GO:0005886">
    <property type="term" value="C:plasma membrane"/>
    <property type="evidence" value="ECO:0007669"/>
    <property type="project" value="UniProtKB-SubCell"/>
</dbReference>
<dbReference type="GO" id="GO:0015138">
    <property type="term" value="F:fumarate transmembrane transporter activity"/>
    <property type="evidence" value="ECO:0007669"/>
    <property type="project" value="TreeGrafter"/>
</dbReference>
<dbReference type="GO" id="GO:0015366">
    <property type="term" value="F:malate:proton symporter activity"/>
    <property type="evidence" value="ECO:0007669"/>
    <property type="project" value="TreeGrafter"/>
</dbReference>
<dbReference type="GO" id="GO:0015141">
    <property type="term" value="F:succinate transmembrane transporter activity"/>
    <property type="evidence" value="ECO:0007669"/>
    <property type="project" value="TreeGrafter"/>
</dbReference>
<dbReference type="GO" id="GO:0070778">
    <property type="term" value="P:L-aspartate transmembrane transport"/>
    <property type="evidence" value="ECO:0007669"/>
    <property type="project" value="TreeGrafter"/>
</dbReference>
<dbReference type="FunFam" id="1.10.3860.10:FF:000001">
    <property type="entry name" value="C4-dicarboxylate transport protein"/>
    <property type="match status" value="1"/>
</dbReference>
<dbReference type="Gene3D" id="1.10.3860.10">
    <property type="entry name" value="Sodium:dicarboxylate symporter"/>
    <property type="match status" value="1"/>
</dbReference>
<dbReference type="HAMAP" id="MF_01300">
    <property type="entry name" value="C4_dicarb_transport"/>
    <property type="match status" value="1"/>
</dbReference>
<dbReference type="InterPro" id="IPR023954">
    <property type="entry name" value="C4_dicarb_transport"/>
</dbReference>
<dbReference type="InterPro" id="IPR001991">
    <property type="entry name" value="Na-dicarboxylate_symporter"/>
</dbReference>
<dbReference type="InterPro" id="IPR018107">
    <property type="entry name" value="Na-dicarboxylate_symporter_CS"/>
</dbReference>
<dbReference type="InterPro" id="IPR036458">
    <property type="entry name" value="Na:dicarbo_symporter_sf"/>
</dbReference>
<dbReference type="NCBIfam" id="NF002461">
    <property type="entry name" value="PRK01663.1"/>
    <property type="match status" value="1"/>
</dbReference>
<dbReference type="NCBIfam" id="NF009587">
    <property type="entry name" value="PRK13027.1"/>
    <property type="match status" value="1"/>
</dbReference>
<dbReference type="PANTHER" id="PTHR42865:SF1">
    <property type="entry name" value="AEROBIC C4-DICARBOXYLATE TRANSPORT PROTEIN"/>
    <property type="match status" value="1"/>
</dbReference>
<dbReference type="PANTHER" id="PTHR42865">
    <property type="entry name" value="PROTON/GLUTAMATE-ASPARTATE SYMPORTER"/>
    <property type="match status" value="1"/>
</dbReference>
<dbReference type="Pfam" id="PF00375">
    <property type="entry name" value="SDF"/>
    <property type="match status" value="1"/>
</dbReference>
<dbReference type="PRINTS" id="PR00173">
    <property type="entry name" value="EDTRNSPORT"/>
</dbReference>
<dbReference type="SUPFAM" id="SSF118215">
    <property type="entry name" value="Proton glutamate symport protein"/>
    <property type="match status" value="1"/>
</dbReference>
<dbReference type="PROSITE" id="PS00713">
    <property type="entry name" value="NA_DICARBOXYL_SYMP_1"/>
    <property type="match status" value="1"/>
</dbReference>
<dbReference type="PROSITE" id="PS00714">
    <property type="entry name" value="NA_DICARBOXYL_SYMP_2"/>
    <property type="match status" value="1"/>
</dbReference>
<comment type="function">
    <text evidence="1">Responsible for the transport of dicarboxylates such as succinate, fumarate, and malate from the periplasm across the membrane.</text>
</comment>
<comment type="subcellular location">
    <subcellularLocation>
        <location evidence="1">Cell inner membrane</location>
        <topology evidence="1">Multi-pass membrane protein</topology>
    </subcellularLocation>
</comment>
<comment type="similarity">
    <text evidence="1">Belongs to the dicarboxylate/amino acid:cation symporter (DAACS) (TC 2.A.23) family.</text>
</comment>
<sequence>MKVSIFKTLYFQVLTAITIGVLLGHFYPEIGAQMKPLGDGFVKLIKMIIAPVIFCTVVTGIAGMESMKAVGRTGAIALLYFEIVSTLALLIGLVVVNVAQPGVGMNIDPATLDAKAVALYAEQASQQGIIPFLLDIIPGSVVGAFASGNILQVLLFAVLFGFALHRLGEKGQLIFNVIESFSRVIFGVINMIMRLAPLGAFGAMAFTIGKYGVGSLVQLGQLILCFYLTCILFVVLVLGTIAKFNGFNIFKFIRYIKEELLIVLGTSSSESVLPRMLDKMENAGCKKSVVGLVIPTGYSFNLDGTSIYLTMAAVFIAQATNTHMDIMHQVTLLVVLLLSSKGAAGVTGSGFIVLAATISAVGHLPLAGLALILGIDRFMSEARALTNLVGNGVATIVVAKWCKQLDNDQLQAVLSNKVLPNVKSSVSVS</sequence>
<proteinExistence type="inferred from homology"/>
<keyword id="KW-0997">Cell inner membrane</keyword>
<keyword id="KW-1003">Cell membrane</keyword>
<keyword id="KW-0472">Membrane</keyword>
<keyword id="KW-0769">Symport</keyword>
<keyword id="KW-0812">Transmembrane</keyword>
<keyword id="KW-1133">Transmembrane helix</keyword>
<keyword id="KW-0813">Transport</keyword>